<sequence length="365" mass="41267">MDNSTGTWEGCHVDSRVDHLFPPSLYIFVIGVGLPTNCLALWAAYRQVRQRNELGVYLMNLSIADLLYICTLPLWVDYFLHHDNWIHGPGSCKLFGFIFYSNIYISIAFLCCISVDRYLAVAHPLRFARLRRVKTAVAVSSVVWATELGANSAPLFHDELFRDRYNHTFCFEKFPMERWVAWMNLYRVFVGFLFPWALMLLCYRGILRAVQSSVSTERQEKVKIKRLALSLIAIVLVCFAPYHALLLSRSAVYLGRPWDCGFEERVFSAYHSSLAFTSLNCVADPILYCLVNEGARSDVAKALHNLLRFLASNKPQEMANASLTLETPLTSKRSTTGKTSGAVWAVPPTAQGDQVPLKVLLPPAQ</sequence>
<comment type="function">
    <text evidence="1 2">Proton-sensing G-protein coupled receptor activated by extracellular pH, which is required to monitor pH changes and generate adaptive reactions. Activated by an optimal pH of 6.8-7.2. Ligand binding causes a conformation change that triggers signaling via guanine nucleotide-binding proteins (G proteins) and modulates the activity of downstream effectors, such as adenylate cyclase. GPR4 is mainly coupled to G(s) G proteins and mediates activation of adenylate cyclase activity. May also couple with G(q) and G(12)/G(13) G proteins (By similarity). Acts as a key regulator of respiratory sensitivity to CO2/H(+) in brain retrotrapezoid nucleus neurons: acts by mediating detection of protons generated by the formation of carbonic acid in the blood, an important mechanism to impulse to breathe (By similarity). Also acts as a regulator of acid secretion in the kidney collecting duct by maintaining acid-base homeostasis in the kidney. Acidosis-induced GPR4 activation increases paracellular gap formation and permeability of vascular endothelial cells, possibly through the G(12)/G(13)/Rho GTPase signaling pathway (By similarity).</text>
</comment>
<comment type="activity regulation">
    <text evidence="1">Activated by a network of residues that connects an extracellular-facing cavity to Glu-147, a conserved charged residue buried in the transmembrane core of the receptor. Protonation likely drives conformational changes in extracellular loop 2 (ECL2), which stabilizes movement of transmembrane 3 (TM3) and a series of rearrangements that connect the extracellular-facing cavity to Glu-147, a residue only conserved in proton-sensing G-protein coupled receptors.</text>
</comment>
<comment type="subcellular location">
    <subcellularLocation>
        <location evidence="1">Cell membrane</location>
        <topology evidence="3">Multi-pass membrane protein</topology>
    </subcellularLocation>
</comment>
<comment type="domain">
    <text evidence="1">A multitude of proton-sensing residues, which include extracellular histidine residues (His-157, His-167 and His-271) or triad of buried acidic residues (Asp-65, Glu-147 and Asp-284), contribute to activation of the G-protein coupled receptor activity and pH sensitivity.</text>
</comment>
<comment type="similarity">
    <text evidence="4">Belongs to the G-protein coupled receptor 1 family.</text>
</comment>
<accession>Q4KLH9</accession>
<gene>
    <name evidence="6" type="primary">Gpr4</name>
</gene>
<feature type="chain" id="PRO_0000379520" description="G-protein coupled receptor 4">
    <location>
        <begin position="1"/>
        <end position="365"/>
    </location>
</feature>
<feature type="topological domain" description="Extracellular" evidence="1">
    <location>
        <begin position="1"/>
        <end position="10"/>
    </location>
</feature>
<feature type="transmembrane region" description="Helical; Name=1" evidence="1">
    <location>
        <begin position="11"/>
        <end position="47"/>
    </location>
</feature>
<feature type="topological domain" description="Cytoplasmic" evidence="1">
    <location>
        <begin position="48"/>
        <end position="51"/>
    </location>
</feature>
<feature type="transmembrane region" description="Helical; Name=2" evidence="1">
    <location>
        <begin position="52"/>
        <end position="82"/>
    </location>
</feature>
<feature type="topological domain" description="Extracellular" evidence="1">
    <location>
        <begin position="83"/>
        <end position="87"/>
    </location>
</feature>
<feature type="transmembrane region" description="Helical; Name=3" evidence="1">
    <location>
        <begin position="88"/>
        <end position="123"/>
    </location>
</feature>
<feature type="topological domain" description="Cytoplasmic" evidence="1">
    <location>
        <begin position="124"/>
        <end position="131"/>
    </location>
</feature>
<feature type="transmembrane region" description="Helical; Name=4" evidence="1">
    <location>
        <begin position="132"/>
        <end position="158"/>
    </location>
</feature>
<feature type="topological domain" description="Extracellular" evidence="1">
    <location>
        <begin position="159"/>
        <end position="174"/>
    </location>
</feature>
<feature type="transmembrane region" description="Helical; Name=5" evidence="1">
    <location>
        <begin position="175"/>
        <end position="212"/>
    </location>
</feature>
<feature type="topological domain" description="Cytoplasmic" evidence="1">
    <location>
        <begin position="213"/>
        <end position="216"/>
    </location>
</feature>
<feature type="transmembrane region" description="Helical; Name=6" evidence="1">
    <location>
        <begin position="217"/>
        <end position="252"/>
    </location>
</feature>
<feature type="topological domain" description="Extracellular" evidence="1">
    <location>
        <begin position="253"/>
        <end position="262"/>
    </location>
</feature>
<feature type="transmembrane region" description="Helical; Name=7" evidence="1">
    <location>
        <begin position="263"/>
        <end position="291"/>
    </location>
</feature>
<feature type="topological domain" description="Cytoplasmic" evidence="1">
    <location>
        <begin position="292"/>
        <end position="365"/>
    </location>
</feature>
<feature type="region of interest" description="Extracellular loop 2 (ECL2)" evidence="1">
    <location>
        <begin position="159"/>
        <end position="174"/>
    </location>
</feature>
<feature type="site" description="Required for activation" evidence="1">
    <location>
        <position position="147"/>
    </location>
</feature>
<feature type="site" description="Proton sensing" evidence="1">
    <location>
        <position position="157"/>
    </location>
</feature>
<feature type="site" description="Proton sensing" evidence="1">
    <location>
        <position position="167"/>
    </location>
</feature>
<feature type="site" description="Proton sensing" evidence="1">
    <location>
        <position position="271"/>
    </location>
</feature>
<feature type="glycosylation site" description="N-linked (GlcNAc...) asparagine" evidence="3">
    <location>
        <position position="3"/>
    </location>
</feature>
<feature type="glycosylation site" description="N-linked (GlcNAc...) asparagine" evidence="3">
    <location>
        <position position="166"/>
    </location>
</feature>
<feature type="disulfide bond" evidence="1">
    <location>
        <begin position="11"/>
        <end position="260"/>
    </location>
</feature>
<feature type="disulfide bond" evidence="4">
    <location>
        <begin position="92"/>
        <end position="170"/>
    </location>
</feature>
<dbReference type="EMBL" id="BC099196">
    <property type="protein sequence ID" value="AAH99196.1"/>
    <property type="molecule type" value="mRNA"/>
</dbReference>
<dbReference type="RefSeq" id="NP_001020851.1">
    <property type="nucleotide sequence ID" value="NM_001025680.1"/>
</dbReference>
<dbReference type="RefSeq" id="XP_006228480.1">
    <property type="nucleotide sequence ID" value="XM_006228418.3"/>
</dbReference>
<dbReference type="RefSeq" id="XP_006228481.1">
    <property type="nucleotide sequence ID" value="XM_006228419.1"/>
</dbReference>
<dbReference type="SMR" id="Q4KLH9"/>
<dbReference type="FunCoup" id="Q4KLH9">
    <property type="interactions" value="120"/>
</dbReference>
<dbReference type="STRING" id="10116.ENSRNOP00000021894"/>
<dbReference type="BindingDB" id="Q4KLH9"/>
<dbReference type="ChEMBL" id="CHEMBL4105950"/>
<dbReference type="GuidetoPHARMACOLOGY" id="84"/>
<dbReference type="GlyCosmos" id="Q4KLH9">
    <property type="glycosylation" value="2 sites, No reported glycans"/>
</dbReference>
<dbReference type="GlyGen" id="Q4KLH9">
    <property type="glycosylation" value="2 sites"/>
</dbReference>
<dbReference type="PhosphoSitePlus" id="Q4KLH9"/>
<dbReference type="PaxDb" id="10116-ENSRNOP00000021894"/>
<dbReference type="Ensembl" id="ENSRNOT00000021893.7">
    <property type="protein sequence ID" value="ENSRNOP00000021894.4"/>
    <property type="gene ID" value="ENSRNOG00000016362.7"/>
</dbReference>
<dbReference type="GeneID" id="308408"/>
<dbReference type="KEGG" id="rno:308408"/>
<dbReference type="UCSC" id="RGD:1311604">
    <property type="organism name" value="rat"/>
</dbReference>
<dbReference type="AGR" id="RGD:1311604"/>
<dbReference type="CTD" id="2828"/>
<dbReference type="RGD" id="1311604">
    <property type="gene designation" value="Gpr4"/>
</dbReference>
<dbReference type="eggNOG" id="ENOG502QS9G">
    <property type="taxonomic scope" value="Eukaryota"/>
</dbReference>
<dbReference type="GeneTree" id="ENSGT01130000278337"/>
<dbReference type="HOGENOM" id="CLU_009579_8_2_1"/>
<dbReference type="InParanoid" id="Q4KLH9"/>
<dbReference type="OMA" id="RTWEGCH"/>
<dbReference type="OrthoDB" id="8742459at2759"/>
<dbReference type="PhylomeDB" id="Q4KLH9"/>
<dbReference type="TreeFam" id="TF331803"/>
<dbReference type="Reactome" id="R-RNO-373076">
    <property type="pathway name" value="Class A/1 (Rhodopsin-like receptors)"/>
</dbReference>
<dbReference type="Reactome" id="R-RNO-416476">
    <property type="pathway name" value="G alpha (q) signalling events"/>
</dbReference>
<dbReference type="PRO" id="PR:Q4KLH9"/>
<dbReference type="Proteomes" id="UP000002494">
    <property type="component" value="Chromosome 1"/>
</dbReference>
<dbReference type="Bgee" id="ENSRNOG00000016362">
    <property type="expression patterns" value="Expressed in heart and 18 other cell types or tissues"/>
</dbReference>
<dbReference type="GO" id="GO:0005886">
    <property type="term" value="C:plasma membrane"/>
    <property type="evidence" value="ECO:0000250"/>
    <property type="project" value="UniProtKB"/>
</dbReference>
<dbReference type="GO" id="GO:0004930">
    <property type="term" value="F:G protein-coupled receptor activity"/>
    <property type="evidence" value="ECO:0000250"/>
    <property type="project" value="UniProtKB"/>
</dbReference>
<dbReference type="GO" id="GO:0007189">
    <property type="term" value="P:adenylate cyclase-activating G protein-coupled receptor signaling pathway"/>
    <property type="evidence" value="ECO:0000250"/>
    <property type="project" value="UniProtKB"/>
</dbReference>
<dbReference type="GO" id="GO:0060055">
    <property type="term" value="P:angiogenesis involved in wound healing"/>
    <property type="evidence" value="ECO:0000266"/>
    <property type="project" value="RGD"/>
</dbReference>
<dbReference type="GO" id="GO:0007186">
    <property type="term" value="P:G protein-coupled receptor signaling pathway"/>
    <property type="evidence" value="ECO:0000266"/>
    <property type="project" value="RGD"/>
</dbReference>
<dbReference type="GO" id="GO:0072144">
    <property type="term" value="P:glomerular mesangial cell development"/>
    <property type="evidence" value="ECO:0000266"/>
    <property type="project" value="RGD"/>
</dbReference>
<dbReference type="GO" id="GO:0016525">
    <property type="term" value="P:negative regulation of angiogenesis"/>
    <property type="evidence" value="ECO:0000266"/>
    <property type="project" value="RGD"/>
</dbReference>
<dbReference type="GO" id="GO:0007200">
    <property type="term" value="P:phospholipase C-activating G protein-coupled receptor signaling pathway"/>
    <property type="evidence" value="ECO:0000266"/>
    <property type="project" value="RGD"/>
</dbReference>
<dbReference type="GO" id="GO:0050729">
    <property type="term" value="P:positive regulation of inflammatory response"/>
    <property type="evidence" value="ECO:0000250"/>
    <property type="project" value="UniProtKB"/>
</dbReference>
<dbReference type="GO" id="GO:0035025">
    <property type="term" value="P:positive regulation of Rho protein signal transduction"/>
    <property type="evidence" value="ECO:0000266"/>
    <property type="project" value="RGD"/>
</dbReference>
<dbReference type="GO" id="GO:0030155">
    <property type="term" value="P:regulation of cell adhesion"/>
    <property type="evidence" value="ECO:0000250"/>
    <property type="project" value="UniProtKB"/>
</dbReference>
<dbReference type="GO" id="GO:0043114">
    <property type="term" value="P:regulation of vascular permeability"/>
    <property type="evidence" value="ECO:0000250"/>
    <property type="project" value="UniProtKB"/>
</dbReference>
<dbReference type="GO" id="GO:0010447">
    <property type="term" value="P:response to acidic pH"/>
    <property type="evidence" value="ECO:0000250"/>
    <property type="project" value="UniProtKB"/>
</dbReference>
<dbReference type="CDD" id="cd15366">
    <property type="entry name" value="7tmA_GPR4"/>
    <property type="match status" value="1"/>
</dbReference>
<dbReference type="FunFam" id="1.20.1070.10:FF:000065">
    <property type="entry name" value="G-protein coupled receptor 4"/>
    <property type="match status" value="1"/>
</dbReference>
<dbReference type="Gene3D" id="1.20.1070.10">
    <property type="entry name" value="Rhodopsin 7-helix transmembrane proteins"/>
    <property type="match status" value="1"/>
</dbReference>
<dbReference type="InterPro" id="IPR000276">
    <property type="entry name" value="GPCR_Rhodpsn"/>
</dbReference>
<dbReference type="InterPro" id="IPR017452">
    <property type="entry name" value="GPCR_Rhodpsn_7TM"/>
</dbReference>
<dbReference type="InterPro" id="IPR002276">
    <property type="entry name" value="GPR4_orph"/>
</dbReference>
<dbReference type="PANTHER" id="PTHR24234:SF10">
    <property type="entry name" value="G-PROTEIN COUPLED RECEPTOR 4"/>
    <property type="match status" value="1"/>
</dbReference>
<dbReference type="PANTHER" id="PTHR24234">
    <property type="entry name" value="LYSOPHOSPHATIDIC ACID RECEPTOR 5/SPHINGOSYLPHOSPHORYLCHOLINE RECEPTOR"/>
    <property type="match status" value="1"/>
</dbReference>
<dbReference type="Pfam" id="PF00001">
    <property type="entry name" value="7tm_1"/>
    <property type="match status" value="1"/>
</dbReference>
<dbReference type="PRINTS" id="PR00237">
    <property type="entry name" value="GPCRRHODOPSN"/>
</dbReference>
<dbReference type="PRINTS" id="PR01147">
    <property type="entry name" value="GPR4RECEPTOR"/>
</dbReference>
<dbReference type="SUPFAM" id="SSF81321">
    <property type="entry name" value="Family A G protein-coupled receptor-like"/>
    <property type="match status" value="1"/>
</dbReference>
<dbReference type="PROSITE" id="PS00237">
    <property type="entry name" value="G_PROTEIN_RECEP_F1_1"/>
    <property type="match status" value="1"/>
</dbReference>
<dbReference type="PROSITE" id="PS50262">
    <property type="entry name" value="G_PROTEIN_RECEP_F1_2"/>
    <property type="match status" value="1"/>
</dbReference>
<keyword id="KW-1003">Cell membrane</keyword>
<keyword id="KW-1015">Disulfide bond</keyword>
<keyword id="KW-0297">G-protein coupled receptor</keyword>
<keyword id="KW-0325">Glycoprotein</keyword>
<keyword id="KW-0472">Membrane</keyword>
<keyword id="KW-0675">Receptor</keyword>
<keyword id="KW-1185">Reference proteome</keyword>
<keyword id="KW-0807">Transducer</keyword>
<keyword id="KW-0812">Transmembrane</keyword>
<keyword id="KW-1133">Transmembrane helix</keyword>
<proteinExistence type="evidence at transcript level"/>
<evidence type="ECO:0000250" key="1">
    <source>
        <dbReference type="UniProtKB" id="P46093"/>
    </source>
</evidence>
<evidence type="ECO:0000250" key="2">
    <source>
        <dbReference type="UniProtKB" id="Q8BUD0"/>
    </source>
</evidence>
<evidence type="ECO:0000255" key="3"/>
<evidence type="ECO:0000255" key="4">
    <source>
        <dbReference type="PROSITE-ProRule" id="PRU00521"/>
    </source>
</evidence>
<evidence type="ECO:0000305" key="5"/>
<evidence type="ECO:0000312" key="6">
    <source>
        <dbReference type="RGD" id="1311604"/>
    </source>
</evidence>
<reference key="1">
    <citation type="journal article" date="2004" name="Genome Res.">
        <title>The status, quality, and expansion of the NIH full-length cDNA project: the Mammalian Gene Collection (MGC).</title>
        <authorList>
            <consortium name="The MGC Project Team"/>
        </authorList>
    </citation>
    <scope>NUCLEOTIDE SEQUENCE [LARGE SCALE MRNA]</scope>
    <source>
        <tissue>Thymus</tissue>
    </source>
</reference>
<name>GPR4_RAT</name>
<organism>
    <name type="scientific">Rattus norvegicus</name>
    <name type="common">Rat</name>
    <dbReference type="NCBI Taxonomy" id="10116"/>
    <lineage>
        <taxon>Eukaryota</taxon>
        <taxon>Metazoa</taxon>
        <taxon>Chordata</taxon>
        <taxon>Craniata</taxon>
        <taxon>Vertebrata</taxon>
        <taxon>Euteleostomi</taxon>
        <taxon>Mammalia</taxon>
        <taxon>Eutheria</taxon>
        <taxon>Euarchontoglires</taxon>
        <taxon>Glires</taxon>
        <taxon>Rodentia</taxon>
        <taxon>Myomorpha</taxon>
        <taxon>Muroidea</taxon>
        <taxon>Muridae</taxon>
        <taxon>Murinae</taxon>
        <taxon>Rattus</taxon>
    </lineage>
</organism>
<protein>
    <recommendedName>
        <fullName evidence="5">G-protein coupled receptor 4</fullName>
    </recommendedName>
</protein>